<keyword id="KW-0150">Chloroplast</keyword>
<keyword id="KW-0507">mRNA processing</keyword>
<keyword id="KW-0934">Plastid</keyword>
<keyword id="KW-0694">RNA-binding</keyword>
<keyword id="KW-0819">tRNA processing</keyword>
<proteinExistence type="inferred from homology"/>
<feature type="chain" id="PRO_0000143568" description="Maturase K">
    <location>
        <begin position="1"/>
        <end position="496"/>
    </location>
</feature>
<comment type="function">
    <text evidence="1">Usually encoded in the trnK tRNA gene intron. Probably assists in splicing its own and other chloroplast group II introns.</text>
</comment>
<comment type="subcellular location">
    <subcellularLocation>
        <location>Plastid</location>
        <location>Chloroplast</location>
    </subcellularLocation>
</comment>
<comment type="similarity">
    <text evidence="1">Belongs to the intron maturase 2 family. MatK subfamily.</text>
</comment>
<accession>Q7J5Z9</accession>
<organism>
    <name type="scientific">Paeonia officinalis</name>
    <name type="common">Common peony</name>
    <dbReference type="NCBI Taxonomy" id="69717"/>
    <lineage>
        <taxon>Eukaryota</taxon>
        <taxon>Viridiplantae</taxon>
        <taxon>Streptophyta</taxon>
        <taxon>Embryophyta</taxon>
        <taxon>Tracheophyta</taxon>
        <taxon>Spermatophyta</taxon>
        <taxon>Magnoliopsida</taxon>
        <taxon>eudicotyledons</taxon>
        <taxon>Gunneridae</taxon>
        <taxon>Pentapetalae</taxon>
        <taxon>Saxifragales</taxon>
        <taxon>Paeoniaceae</taxon>
        <taxon>Paeonia</taxon>
    </lineage>
</organism>
<sequence length="496" mass="58553">MEKSQGYLELDKSWRHDFLYPLIFQEYIYALAHEQGLNRSILVENTDHDNKYSSLIVKRLITLIYQQNHFLIFDNDSNQNPFWKHNNNLYSQTISEGFVIIVEIPFSPRFVDSLEEKKKILKSNNLRSIHSIFPFLEDQILHLNFVANILIPYPIHLEIVVQSLRYRVKDASSLHLLRFFLFTLNKSISSFSKRNQRFFLFLYNSHVYEYESTFLFLRNKTSHLRSTSSGAFLERIFFYGKIKHLIEVFANDFQAILWLFKDPFMHYVRYQGKSILASKRTSLRMNKWKYYLVNFWQCQFYVWSQPGRVSINQLSNHSLDFLGYLSSVRRNPLAVRSQMLENSFLTDNAIKKFDIIVLLISLIGSLAKAKFCNVLGHPLSKPARADSSDSDIIERFVRICRNLSHYHSGSSKKKSLYRIKYILRLSCARTLARKHKTTVRSFLKRLGSELLEEFLTEDGQVISLIFPRTSSTSWRLYRGGIWYLDITCINDLANHE</sequence>
<name>MATK_PAEOF</name>
<geneLocation type="chloroplast"/>
<reference key="1">
    <citation type="journal article" date="1997" name="Am. J. Bot.">
        <title>Chloroplast DNA phylogeny, reticulate evolution, and biogeography of Paeonia (Paeoniaceae).</title>
        <authorList>
            <person name="Sang T."/>
            <person name="Crawford D.J."/>
            <person name="Stuessy T.F."/>
        </authorList>
    </citation>
    <scope>NUCLEOTIDE SEQUENCE [GENOMIC DNA]</scope>
</reference>
<gene>
    <name evidence="1" type="primary">matK</name>
</gene>
<protein>
    <recommendedName>
        <fullName evidence="1">Maturase K</fullName>
    </recommendedName>
    <alternativeName>
        <fullName evidence="1">Intron maturase</fullName>
    </alternativeName>
</protein>
<dbReference type="EMBL" id="AF033612">
    <property type="protein sequence ID" value="AAB92544.1"/>
    <property type="molecule type" value="Genomic_DNA"/>
</dbReference>
<dbReference type="GO" id="GO:0009507">
    <property type="term" value="C:chloroplast"/>
    <property type="evidence" value="ECO:0007669"/>
    <property type="project" value="UniProtKB-SubCell"/>
</dbReference>
<dbReference type="GO" id="GO:0003723">
    <property type="term" value="F:RNA binding"/>
    <property type="evidence" value="ECO:0007669"/>
    <property type="project" value="UniProtKB-KW"/>
</dbReference>
<dbReference type="GO" id="GO:0006397">
    <property type="term" value="P:mRNA processing"/>
    <property type="evidence" value="ECO:0007669"/>
    <property type="project" value="UniProtKB-KW"/>
</dbReference>
<dbReference type="GO" id="GO:0008380">
    <property type="term" value="P:RNA splicing"/>
    <property type="evidence" value="ECO:0007669"/>
    <property type="project" value="UniProtKB-UniRule"/>
</dbReference>
<dbReference type="GO" id="GO:0008033">
    <property type="term" value="P:tRNA processing"/>
    <property type="evidence" value="ECO:0007669"/>
    <property type="project" value="UniProtKB-KW"/>
</dbReference>
<dbReference type="HAMAP" id="MF_01390">
    <property type="entry name" value="MatK"/>
    <property type="match status" value="1"/>
</dbReference>
<dbReference type="InterPro" id="IPR024937">
    <property type="entry name" value="Domain_X"/>
</dbReference>
<dbReference type="InterPro" id="IPR002866">
    <property type="entry name" value="Maturase_MatK"/>
</dbReference>
<dbReference type="InterPro" id="IPR024942">
    <property type="entry name" value="Maturase_MatK_N"/>
</dbReference>
<dbReference type="PANTHER" id="PTHR34811">
    <property type="entry name" value="MATURASE K"/>
    <property type="match status" value="1"/>
</dbReference>
<dbReference type="PANTHER" id="PTHR34811:SF1">
    <property type="entry name" value="MATURASE K"/>
    <property type="match status" value="1"/>
</dbReference>
<dbReference type="Pfam" id="PF01348">
    <property type="entry name" value="Intron_maturas2"/>
    <property type="match status" value="1"/>
</dbReference>
<dbReference type="Pfam" id="PF01824">
    <property type="entry name" value="MatK_N"/>
    <property type="match status" value="1"/>
</dbReference>
<evidence type="ECO:0000255" key="1">
    <source>
        <dbReference type="HAMAP-Rule" id="MF_01390"/>
    </source>
</evidence>